<dbReference type="EMBL" id="CP000802">
    <property type="protein sequence ID" value="ABV07706.1"/>
    <property type="molecule type" value="Genomic_DNA"/>
</dbReference>
<dbReference type="RefSeq" id="WP_001029684.1">
    <property type="nucleotide sequence ID" value="NC_009800.1"/>
</dbReference>
<dbReference type="SMR" id="A8A5A2"/>
<dbReference type="GeneID" id="93778690"/>
<dbReference type="KEGG" id="ecx:EcHS_A3491"/>
<dbReference type="HOGENOM" id="CLU_072439_5_0_6"/>
<dbReference type="GO" id="GO:1990904">
    <property type="term" value="C:ribonucleoprotein complex"/>
    <property type="evidence" value="ECO:0007669"/>
    <property type="project" value="UniProtKB-KW"/>
</dbReference>
<dbReference type="GO" id="GO:0005840">
    <property type="term" value="C:ribosome"/>
    <property type="evidence" value="ECO:0007669"/>
    <property type="project" value="UniProtKB-KW"/>
</dbReference>
<dbReference type="GO" id="GO:0019843">
    <property type="term" value="F:rRNA binding"/>
    <property type="evidence" value="ECO:0007669"/>
    <property type="project" value="UniProtKB-UniRule"/>
</dbReference>
<dbReference type="GO" id="GO:0003735">
    <property type="term" value="F:structural constituent of ribosome"/>
    <property type="evidence" value="ECO:0007669"/>
    <property type="project" value="InterPro"/>
</dbReference>
<dbReference type="GO" id="GO:0006412">
    <property type="term" value="P:translation"/>
    <property type="evidence" value="ECO:0007669"/>
    <property type="project" value="UniProtKB-UniRule"/>
</dbReference>
<dbReference type="FunFam" id="3.30.420.80:FF:000001">
    <property type="entry name" value="30S ribosomal protein S11"/>
    <property type="match status" value="1"/>
</dbReference>
<dbReference type="Gene3D" id="3.30.420.80">
    <property type="entry name" value="Ribosomal protein S11"/>
    <property type="match status" value="1"/>
</dbReference>
<dbReference type="HAMAP" id="MF_01310">
    <property type="entry name" value="Ribosomal_uS11"/>
    <property type="match status" value="1"/>
</dbReference>
<dbReference type="InterPro" id="IPR001971">
    <property type="entry name" value="Ribosomal_uS11"/>
</dbReference>
<dbReference type="InterPro" id="IPR019981">
    <property type="entry name" value="Ribosomal_uS11_bac-type"/>
</dbReference>
<dbReference type="InterPro" id="IPR018102">
    <property type="entry name" value="Ribosomal_uS11_CS"/>
</dbReference>
<dbReference type="InterPro" id="IPR036967">
    <property type="entry name" value="Ribosomal_uS11_sf"/>
</dbReference>
<dbReference type="NCBIfam" id="NF003698">
    <property type="entry name" value="PRK05309.1"/>
    <property type="match status" value="1"/>
</dbReference>
<dbReference type="NCBIfam" id="TIGR03632">
    <property type="entry name" value="uS11_bact"/>
    <property type="match status" value="1"/>
</dbReference>
<dbReference type="PANTHER" id="PTHR11759">
    <property type="entry name" value="40S RIBOSOMAL PROTEIN S14/30S RIBOSOMAL PROTEIN S11"/>
    <property type="match status" value="1"/>
</dbReference>
<dbReference type="Pfam" id="PF00411">
    <property type="entry name" value="Ribosomal_S11"/>
    <property type="match status" value="1"/>
</dbReference>
<dbReference type="PIRSF" id="PIRSF002131">
    <property type="entry name" value="Ribosomal_S11"/>
    <property type="match status" value="1"/>
</dbReference>
<dbReference type="SUPFAM" id="SSF53137">
    <property type="entry name" value="Translational machinery components"/>
    <property type="match status" value="1"/>
</dbReference>
<dbReference type="PROSITE" id="PS00054">
    <property type="entry name" value="RIBOSOMAL_S11"/>
    <property type="match status" value="1"/>
</dbReference>
<gene>
    <name evidence="1" type="primary">rpsK</name>
    <name type="ordered locus">EcHS_A3491</name>
</gene>
<accession>A8A5A2</accession>
<feature type="chain" id="PRO_1000067501" description="Small ribosomal subunit protein uS11">
    <location>
        <begin position="1"/>
        <end position="129"/>
    </location>
</feature>
<evidence type="ECO:0000255" key="1">
    <source>
        <dbReference type="HAMAP-Rule" id="MF_01310"/>
    </source>
</evidence>
<evidence type="ECO:0000305" key="2"/>
<proteinExistence type="inferred from homology"/>
<name>RS11_ECOHS</name>
<sequence>MAKAPIRARKRVRKQVSDGVAHIHASFNNTIVTITDRQGNALGWATAGGSGFRGSRKSTPFAAQVAAERCADAVKEYGIKNLEVMVKGPGPGRESTIRALNAAGFRITNITDVTPIPHNGCRPPKKRRV</sequence>
<organism>
    <name type="scientific">Escherichia coli O9:H4 (strain HS)</name>
    <dbReference type="NCBI Taxonomy" id="331112"/>
    <lineage>
        <taxon>Bacteria</taxon>
        <taxon>Pseudomonadati</taxon>
        <taxon>Pseudomonadota</taxon>
        <taxon>Gammaproteobacteria</taxon>
        <taxon>Enterobacterales</taxon>
        <taxon>Enterobacteriaceae</taxon>
        <taxon>Escherichia</taxon>
    </lineage>
</organism>
<protein>
    <recommendedName>
        <fullName evidence="1">Small ribosomal subunit protein uS11</fullName>
    </recommendedName>
    <alternativeName>
        <fullName evidence="2">30S ribosomal protein S11</fullName>
    </alternativeName>
</protein>
<comment type="function">
    <text evidence="1">Located on the platform of the 30S subunit, it bridges several disparate RNA helices of the 16S rRNA. Forms part of the Shine-Dalgarno cleft in the 70S ribosome.</text>
</comment>
<comment type="subunit">
    <text evidence="1">Part of the 30S ribosomal subunit. Interacts with proteins S7 and S18. Binds to IF-3.</text>
</comment>
<comment type="similarity">
    <text evidence="1">Belongs to the universal ribosomal protein uS11 family.</text>
</comment>
<reference key="1">
    <citation type="journal article" date="2008" name="J. Bacteriol.">
        <title>The pangenome structure of Escherichia coli: comparative genomic analysis of E. coli commensal and pathogenic isolates.</title>
        <authorList>
            <person name="Rasko D.A."/>
            <person name="Rosovitz M.J."/>
            <person name="Myers G.S.A."/>
            <person name="Mongodin E.F."/>
            <person name="Fricke W.F."/>
            <person name="Gajer P."/>
            <person name="Crabtree J."/>
            <person name="Sebaihia M."/>
            <person name="Thomson N.R."/>
            <person name="Chaudhuri R."/>
            <person name="Henderson I.R."/>
            <person name="Sperandio V."/>
            <person name="Ravel J."/>
        </authorList>
    </citation>
    <scope>NUCLEOTIDE SEQUENCE [LARGE SCALE GENOMIC DNA]</scope>
    <source>
        <strain>HS</strain>
    </source>
</reference>
<keyword id="KW-0687">Ribonucleoprotein</keyword>
<keyword id="KW-0689">Ribosomal protein</keyword>
<keyword id="KW-0694">RNA-binding</keyword>
<keyword id="KW-0699">rRNA-binding</keyword>